<gene>
    <name type="primary">WNT3A</name>
</gene>
<feature type="chain" id="PRO_0000200614" description="Protein Wnt-3a">
    <location>
        <begin position="1" status="less than"/>
        <end position="123" status="greater than"/>
    </location>
</feature>
<feature type="lipid moiety-binding region" description="O-palmitoleoyl serine" evidence="3">
    <location>
        <position position="1"/>
    </location>
</feature>
<feature type="glycosylation site" description="N-linked (GlcNAc...) asparagine" evidence="4">
    <location>
        <position position="90"/>
    </location>
</feature>
<feature type="disulfide bond" evidence="2">
    <location>
        <begin position="89"/>
        <end position="104"/>
    </location>
</feature>
<feature type="non-terminal residue">
    <location>
        <position position="1"/>
    </location>
</feature>
<feature type="non-terminal residue">
    <location>
        <position position="123"/>
    </location>
</feature>
<sequence>SGSCEVKTCWWSQPDFRVIGDYLKDKYDSASEMVVEKHRESRGWVETLRPKYNFFKAPTEKDLVYYENSPNFCEPNPETGSFGTRDRICNVTSHGIDGCDLLCCGRGHNTRTEKRKEKCHCIF</sequence>
<proteinExistence type="inferred from homology"/>
<dbReference type="EMBL" id="M91281">
    <property type="protein sequence ID" value="AAA49630.1"/>
    <property type="molecule type" value="Genomic_DNA"/>
</dbReference>
<dbReference type="SMR" id="P28125"/>
<dbReference type="GlyCosmos" id="P28125">
    <property type="glycosylation" value="1 site, No reported glycans"/>
</dbReference>
<dbReference type="HOGENOM" id="CLU_033039_1_0_1"/>
<dbReference type="InParanoid" id="P28125"/>
<dbReference type="Proteomes" id="UP000001645">
    <property type="component" value="Unplaced"/>
</dbReference>
<dbReference type="GO" id="GO:0005615">
    <property type="term" value="C:extracellular space"/>
    <property type="evidence" value="ECO:0000250"/>
    <property type="project" value="UniProtKB"/>
</dbReference>
<dbReference type="GO" id="GO:0005125">
    <property type="term" value="F:cytokine activity"/>
    <property type="evidence" value="ECO:0007669"/>
    <property type="project" value="TreeGrafter"/>
</dbReference>
<dbReference type="GO" id="GO:0005109">
    <property type="term" value="F:frizzled binding"/>
    <property type="evidence" value="ECO:0007669"/>
    <property type="project" value="TreeGrafter"/>
</dbReference>
<dbReference type="GO" id="GO:0060070">
    <property type="term" value="P:canonical Wnt signaling pathway"/>
    <property type="evidence" value="ECO:0000250"/>
    <property type="project" value="UniProtKB"/>
</dbReference>
<dbReference type="GO" id="GO:0045165">
    <property type="term" value="P:cell fate commitment"/>
    <property type="evidence" value="ECO:0007669"/>
    <property type="project" value="TreeGrafter"/>
</dbReference>
<dbReference type="GO" id="GO:0030182">
    <property type="term" value="P:neuron differentiation"/>
    <property type="evidence" value="ECO:0007669"/>
    <property type="project" value="TreeGrafter"/>
</dbReference>
<dbReference type="FunFam" id="3.30.2460.20:FF:000009">
    <property type="entry name" value="Protein Wnt-3a"/>
    <property type="match status" value="1"/>
</dbReference>
<dbReference type="Gene3D" id="3.30.2460.20">
    <property type="match status" value="1"/>
</dbReference>
<dbReference type="InterPro" id="IPR005817">
    <property type="entry name" value="Wnt"/>
</dbReference>
<dbReference type="InterPro" id="IPR043158">
    <property type="entry name" value="Wnt_C"/>
</dbReference>
<dbReference type="PANTHER" id="PTHR12027:SF88">
    <property type="entry name" value="PROTEIN WNT-3A"/>
    <property type="match status" value="1"/>
</dbReference>
<dbReference type="PANTHER" id="PTHR12027">
    <property type="entry name" value="WNT RELATED"/>
    <property type="match status" value="1"/>
</dbReference>
<dbReference type="Pfam" id="PF00110">
    <property type="entry name" value="wnt"/>
    <property type="match status" value="1"/>
</dbReference>
<dbReference type="SMART" id="SM00097">
    <property type="entry name" value="WNT1"/>
    <property type="match status" value="1"/>
</dbReference>
<comment type="function">
    <text evidence="1 3">Ligand for members of the frizzled family of seven transmembrane receptors. Functions in the canonical Wnt signaling pathway that results in activation of transcription factors of the TCF/LEF family. Required for normal embryonic mesoderm development and formation of caudal somites. Required for normal morphogenesis of the developing neural tube.</text>
</comment>
<comment type="subcellular location">
    <subcellularLocation>
        <location evidence="1">Secreted</location>
        <location evidence="1">Extracellular space</location>
        <location evidence="1">Extracellular matrix</location>
    </subcellularLocation>
    <subcellularLocation>
        <location evidence="1">Secreted</location>
    </subcellularLocation>
</comment>
<comment type="PTM">
    <text evidence="1">Disulfide bonds have critical and distinct roles in secretion and activity. Loss of each conserved cysteine results in high molecular weight oxidized Wnt oligomers, which are formed through inter-Wnt disulfide bonding.</text>
</comment>
<comment type="PTM">
    <text evidence="1 3">Palmitoleoylation is required for efficient binding to frizzled receptors. Depalmitoleoylation leads to Wnt signaling pathway inhibition.</text>
</comment>
<comment type="similarity">
    <text evidence="5">Belongs to the Wnt family.</text>
</comment>
<evidence type="ECO:0000250" key="1">
    <source>
        <dbReference type="UniProtKB" id="P27467"/>
    </source>
</evidence>
<evidence type="ECO:0000250" key="2">
    <source>
        <dbReference type="UniProtKB" id="P28026"/>
    </source>
</evidence>
<evidence type="ECO:0000250" key="3">
    <source>
        <dbReference type="UniProtKB" id="P56704"/>
    </source>
</evidence>
<evidence type="ECO:0000255" key="4"/>
<evidence type="ECO:0000305" key="5"/>
<reference key="1">
    <citation type="journal article" date="1992" name="Proc. Natl. Acad. Sci. U.S.A.">
        <title>Diversification of the Wnt gene family on the ancestral lineage of vertebrates.</title>
        <authorList>
            <person name="Sidow A."/>
        </authorList>
    </citation>
    <scope>NUCLEOTIDE SEQUENCE [GENOMIC DNA]</scope>
</reference>
<protein>
    <recommendedName>
        <fullName>Protein Wnt-3a</fullName>
    </recommendedName>
</protein>
<organism>
    <name type="scientific">Meleagris gallopavo</name>
    <name type="common">Wild turkey</name>
    <dbReference type="NCBI Taxonomy" id="9103"/>
    <lineage>
        <taxon>Eukaryota</taxon>
        <taxon>Metazoa</taxon>
        <taxon>Chordata</taxon>
        <taxon>Craniata</taxon>
        <taxon>Vertebrata</taxon>
        <taxon>Euteleostomi</taxon>
        <taxon>Archelosauria</taxon>
        <taxon>Archosauria</taxon>
        <taxon>Dinosauria</taxon>
        <taxon>Saurischia</taxon>
        <taxon>Theropoda</taxon>
        <taxon>Coelurosauria</taxon>
        <taxon>Aves</taxon>
        <taxon>Neognathae</taxon>
        <taxon>Galloanserae</taxon>
        <taxon>Galliformes</taxon>
        <taxon>Phasianidae</taxon>
        <taxon>Meleagridinae</taxon>
        <taxon>Meleagris</taxon>
    </lineage>
</organism>
<accession>P28125</accession>
<keyword id="KW-0217">Developmental protein</keyword>
<keyword id="KW-1015">Disulfide bond</keyword>
<keyword id="KW-0272">Extracellular matrix</keyword>
<keyword id="KW-0325">Glycoprotein</keyword>
<keyword id="KW-0449">Lipoprotein</keyword>
<keyword id="KW-1185">Reference proteome</keyword>
<keyword id="KW-0964">Secreted</keyword>
<keyword id="KW-0879">Wnt signaling pathway</keyword>
<name>WNT3A_MELGA</name>